<evidence type="ECO:0000255" key="1">
    <source>
        <dbReference type="HAMAP-Rule" id="MF_00122"/>
    </source>
</evidence>
<evidence type="ECO:0000256" key="2">
    <source>
        <dbReference type="SAM" id="MobiDB-lite"/>
    </source>
</evidence>
<organism>
    <name type="scientific">Renibacterium salmoninarum (strain ATCC 33209 / DSM 20767 / JCM 11484 / NBRC 15589 / NCIMB 2235)</name>
    <dbReference type="NCBI Taxonomy" id="288705"/>
    <lineage>
        <taxon>Bacteria</taxon>
        <taxon>Bacillati</taxon>
        <taxon>Actinomycetota</taxon>
        <taxon>Actinomycetes</taxon>
        <taxon>Micrococcales</taxon>
        <taxon>Micrococcaceae</taxon>
        <taxon>Renibacterium</taxon>
    </lineage>
</organism>
<comment type="function">
    <text evidence="1">Allows the formation of correctly charged Asn-tRNA(Asn) or Gln-tRNA(Gln) through the transamidation of misacylated Asp-tRNA(Asn) or Glu-tRNA(Gln) in organisms which lack either or both of asparaginyl-tRNA or glutaminyl-tRNA synthetases. The reaction takes place in the presence of glutamine and ATP through an activated phospho-Asp-tRNA(Asn) or phospho-Glu-tRNA(Gln).</text>
</comment>
<comment type="catalytic activity">
    <reaction evidence="1">
        <text>L-glutamyl-tRNA(Gln) + L-glutamine + ATP + H2O = L-glutaminyl-tRNA(Gln) + L-glutamate + ADP + phosphate + H(+)</text>
        <dbReference type="Rhea" id="RHEA:17521"/>
        <dbReference type="Rhea" id="RHEA-COMP:9681"/>
        <dbReference type="Rhea" id="RHEA-COMP:9684"/>
        <dbReference type="ChEBI" id="CHEBI:15377"/>
        <dbReference type="ChEBI" id="CHEBI:15378"/>
        <dbReference type="ChEBI" id="CHEBI:29985"/>
        <dbReference type="ChEBI" id="CHEBI:30616"/>
        <dbReference type="ChEBI" id="CHEBI:43474"/>
        <dbReference type="ChEBI" id="CHEBI:58359"/>
        <dbReference type="ChEBI" id="CHEBI:78520"/>
        <dbReference type="ChEBI" id="CHEBI:78521"/>
        <dbReference type="ChEBI" id="CHEBI:456216"/>
    </reaction>
</comment>
<comment type="catalytic activity">
    <reaction evidence="1">
        <text>L-aspartyl-tRNA(Asn) + L-glutamine + ATP + H2O = L-asparaginyl-tRNA(Asn) + L-glutamate + ADP + phosphate + 2 H(+)</text>
        <dbReference type="Rhea" id="RHEA:14513"/>
        <dbReference type="Rhea" id="RHEA-COMP:9674"/>
        <dbReference type="Rhea" id="RHEA-COMP:9677"/>
        <dbReference type="ChEBI" id="CHEBI:15377"/>
        <dbReference type="ChEBI" id="CHEBI:15378"/>
        <dbReference type="ChEBI" id="CHEBI:29985"/>
        <dbReference type="ChEBI" id="CHEBI:30616"/>
        <dbReference type="ChEBI" id="CHEBI:43474"/>
        <dbReference type="ChEBI" id="CHEBI:58359"/>
        <dbReference type="ChEBI" id="CHEBI:78515"/>
        <dbReference type="ChEBI" id="CHEBI:78516"/>
        <dbReference type="ChEBI" id="CHEBI:456216"/>
    </reaction>
</comment>
<comment type="subunit">
    <text evidence="1">Heterotrimer of A, B and C subunits.</text>
</comment>
<comment type="similarity">
    <text evidence="1">Belongs to the GatC family.</text>
</comment>
<accession>A9WPN1</accession>
<feature type="chain" id="PRO_1000076192" description="Aspartyl/glutamyl-tRNA(Asn/Gln) amidotransferase subunit C">
    <location>
        <begin position="1"/>
        <end position="98"/>
    </location>
</feature>
<feature type="region of interest" description="Disordered" evidence="2">
    <location>
        <begin position="76"/>
        <end position="98"/>
    </location>
</feature>
<reference key="1">
    <citation type="journal article" date="2008" name="J. Bacteriol.">
        <title>Genome sequence of the fish pathogen Renibacterium salmoninarum suggests reductive evolution away from an environmental Arthrobacter ancestor.</title>
        <authorList>
            <person name="Wiens G.D."/>
            <person name="Rockey D.D."/>
            <person name="Wu Z."/>
            <person name="Chang J."/>
            <person name="Levy R."/>
            <person name="Crane S."/>
            <person name="Chen D.S."/>
            <person name="Capri G.R."/>
            <person name="Burnett J.R."/>
            <person name="Sudheesh P.S."/>
            <person name="Schipma M.J."/>
            <person name="Burd H."/>
            <person name="Bhattacharyya A."/>
            <person name="Rhodes L.D."/>
            <person name="Kaul R."/>
            <person name="Strom M.S."/>
        </authorList>
    </citation>
    <scope>NUCLEOTIDE SEQUENCE [LARGE SCALE GENOMIC DNA]</scope>
    <source>
        <strain>ATCC 33209 / DSM 20767 / JCM 11484 / NBRC 15589 / NCIMB 2235</strain>
    </source>
</reference>
<keyword id="KW-0067">ATP-binding</keyword>
<keyword id="KW-0436">Ligase</keyword>
<keyword id="KW-0547">Nucleotide-binding</keyword>
<keyword id="KW-0648">Protein biosynthesis</keyword>
<keyword id="KW-1185">Reference proteome</keyword>
<proteinExistence type="inferred from homology"/>
<name>GATC_RENSM</name>
<dbReference type="EC" id="6.3.5.-" evidence="1"/>
<dbReference type="EMBL" id="CP000910">
    <property type="protein sequence ID" value="ABY23025.1"/>
    <property type="molecule type" value="Genomic_DNA"/>
</dbReference>
<dbReference type="RefSeq" id="WP_012244710.1">
    <property type="nucleotide sequence ID" value="NC_010168.1"/>
</dbReference>
<dbReference type="SMR" id="A9WPN1"/>
<dbReference type="STRING" id="288705.RSal33209_1288"/>
<dbReference type="KEGG" id="rsa:RSal33209_1288"/>
<dbReference type="eggNOG" id="COG0721">
    <property type="taxonomic scope" value="Bacteria"/>
</dbReference>
<dbReference type="HOGENOM" id="CLU_105899_1_0_11"/>
<dbReference type="Proteomes" id="UP000002007">
    <property type="component" value="Chromosome"/>
</dbReference>
<dbReference type="GO" id="GO:0050566">
    <property type="term" value="F:asparaginyl-tRNA synthase (glutamine-hydrolyzing) activity"/>
    <property type="evidence" value="ECO:0007669"/>
    <property type="project" value="RHEA"/>
</dbReference>
<dbReference type="GO" id="GO:0005524">
    <property type="term" value="F:ATP binding"/>
    <property type="evidence" value="ECO:0007669"/>
    <property type="project" value="UniProtKB-KW"/>
</dbReference>
<dbReference type="GO" id="GO:0050567">
    <property type="term" value="F:glutaminyl-tRNA synthase (glutamine-hydrolyzing) activity"/>
    <property type="evidence" value="ECO:0007669"/>
    <property type="project" value="UniProtKB-UniRule"/>
</dbReference>
<dbReference type="GO" id="GO:0070681">
    <property type="term" value="P:glutaminyl-tRNAGln biosynthesis via transamidation"/>
    <property type="evidence" value="ECO:0007669"/>
    <property type="project" value="TreeGrafter"/>
</dbReference>
<dbReference type="GO" id="GO:0006450">
    <property type="term" value="P:regulation of translational fidelity"/>
    <property type="evidence" value="ECO:0007669"/>
    <property type="project" value="InterPro"/>
</dbReference>
<dbReference type="GO" id="GO:0006412">
    <property type="term" value="P:translation"/>
    <property type="evidence" value="ECO:0007669"/>
    <property type="project" value="UniProtKB-UniRule"/>
</dbReference>
<dbReference type="Gene3D" id="1.10.20.60">
    <property type="entry name" value="Glu-tRNAGln amidotransferase C subunit, N-terminal domain"/>
    <property type="match status" value="1"/>
</dbReference>
<dbReference type="HAMAP" id="MF_00122">
    <property type="entry name" value="GatC"/>
    <property type="match status" value="1"/>
</dbReference>
<dbReference type="InterPro" id="IPR036113">
    <property type="entry name" value="Asp/Glu-ADT_sf_sub_c"/>
</dbReference>
<dbReference type="InterPro" id="IPR003837">
    <property type="entry name" value="GatC"/>
</dbReference>
<dbReference type="NCBIfam" id="TIGR00135">
    <property type="entry name" value="gatC"/>
    <property type="match status" value="1"/>
</dbReference>
<dbReference type="PANTHER" id="PTHR15004">
    <property type="entry name" value="GLUTAMYL-TRNA(GLN) AMIDOTRANSFERASE SUBUNIT C, MITOCHONDRIAL"/>
    <property type="match status" value="1"/>
</dbReference>
<dbReference type="PANTHER" id="PTHR15004:SF0">
    <property type="entry name" value="GLUTAMYL-TRNA(GLN) AMIDOTRANSFERASE SUBUNIT C, MITOCHONDRIAL"/>
    <property type="match status" value="1"/>
</dbReference>
<dbReference type="Pfam" id="PF02686">
    <property type="entry name" value="GatC"/>
    <property type="match status" value="1"/>
</dbReference>
<dbReference type="SUPFAM" id="SSF141000">
    <property type="entry name" value="Glu-tRNAGln amidotransferase C subunit"/>
    <property type="match status" value="1"/>
</dbReference>
<gene>
    <name evidence="1" type="primary">gatC</name>
    <name type="ordered locus">RSal33209_1288</name>
</gene>
<sequence>MAEINRDDVAHLAQLAHIDMSESELDRMAGELAVIVDSVKSVSEIAGDDAPATSHPIPLSNVLREDTVGHVLSQEQVLSGAPDAEDGRFKVPAILEED</sequence>
<protein>
    <recommendedName>
        <fullName evidence="1">Aspartyl/glutamyl-tRNA(Asn/Gln) amidotransferase subunit C</fullName>
        <shortName evidence="1">Asp/Glu-ADT subunit C</shortName>
        <ecNumber evidence="1">6.3.5.-</ecNumber>
    </recommendedName>
</protein>